<accession>A4SR08</accession>
<evidence type="ECO:0000255" key="1">
    <source>
        <dbReference type="HAMAP-Rule" id="MF_00199"/>
    </source>
</evidence>
<organism>
    <name type="scientific">Aeromonas salmonicida (strain A449)</name>
    <dbReference type="NCBI Taxonomy" id="382245"/>
    <lineage>
        <taxon>Bacteria</taxon>
        <taxon>Pseudomonadati</taxon>
        <taxon>Pseudomonadota</taxon>
        <taxon>Gammaproteobacteria</taxon>
        <taxon>Aeromonadales</taxon>
        <taxon>Aeromonadaceae</taxon>
        <taxon>Aeromonas</taxon>
    </lineage>
</organism>
<proteinExistence type="inferred from homology"/>
<feature type="chain" id="PRO_1000012042" description="Bis(5'-nucleosyl)-tetraphosphatase, symmetrical">
    <location>
        <begin position="1"/>
        <end position="273"/>
    </location>
</feature>
<dbReference type="EC" id="3.6.1.41" evidence="1"/>
<dbReference type="EMBL" id="CP000644">
    <property type="protein sequence ID" value="ABO91330.1"/>
    <property type="molecule type" value="Genomic_DNA"/>
</dbReference>
<dbReference type="RefSeq" id="WP_005311698.1">
    <property type="nucleotide sequence ID" value="NC_009348.1"/>
</dbReference>
<dbReference type="SMR" id="A4SR08"/>
<dbReference type="STRING" id="29491.GCA_000820065_03742"/>
<dbReference type="KEGG" id="asa:ASA_3352"/>
<dbReference type="eggNOG" id="COG0639">
    <property type="taxonomic scope" value="Bacteria"/>
</dbReference>
<dbReference type="HOGENOM" id="CLU_056184_2_0_6"/>
<dbReference type="Proteomes" id="UP000000225">
    <property type="component" value="Chromosome"/>
</dbReference>
<dbReference type="GO" id="GO:0008803">
    <property type="term" value="F:bis(5'-nucleosyl)-tetraphosphatase (symmetrical) activity"/>
    <property type="evidence" value="ECO:0007669"/>
    <property type="project" value="UniProtKB-UniRule"/>
</dbReference>
<dbReference type="CDD" id="cd07422">
    <property type="entry name" value="MPP_ApaH"/>
    <property type="match status" value="1"/>
</dbReference>
<dbReference type="Gene3D" id="3.60.21.10">
    <property type="match status" value="1"/>
</dbReference>
<dbReference type="HAMAP" id="MF_00199">
    <property type="entry name" value="ApaH"/>
    <property type="match status" value="1"/>
</dbReference>
<dbReference type="InterPro" id="IPR004617">
    <property type="entry name" value="ApaH"/>
</dbReference>
<dbReference type="InterPro" id="IPR004843">
    <property type="entry name" value="Calcineurin-like_PHP_ApaH"/>
</dbReference>
<dbReference type="InterPro" id="IPR029052">
    <property type="entry name" value="Metallo-depent_PP-like"/>
</dbReference>
<dbReference type="NCBIfam" id="TIGR00668">
    <property type="entry name" value="apaH"/>
    <property type="match status" value="1"/>
</dbReference>
<dbReference type="NCBIfam" id="NF001204">
    <property type="entry name" value="PRK00166.1"/>
    <property type="match status" value="1"/>
</dbReference>
<dbReference type="PANTHER" id="PTHR40942">
    <property type="match status" value="1"/>
</dbReference>
<dbReference type="PANTHER" id="PTHR40942:SF4">
    <property type="entry name" value="CYTOCHROME C5"/>
    <property type="match status" value="1"/>
</dbReference>
<dbReference type="Pfam" id="PF00149">
    <property type="entry name" value="Metallophos"/>
    <property type="match status" value="1"/>
</dbReference>
<dbReference type="PIRSF" id="PIRSF000903">
    <property type="entry name" value="B5n-ttraPtase_sm"/>
    <property type="match status" value="1"/>
</dbReference>
<dbReference type="SUPFAM" id="SSF56300">
    <property type="entry name" value="Metallo-dependent phosphatases"/>
    <property type="match status" value="1"/>
</dbReference>
<protein>
    <recommendedName>
        <fullName evidence="1">Bis(5'-nucleosyl)-tetraphosphatase, symmetrical</fullName>
        <ecNumber evidence="1">3.6.1.41</ecNumber>
    </recommendedName>
    <alternativeName>
        <fullName evidence="1">Ap4A hydrolase</fullName>
    </alternativeName>
    <alternativeName>
        <fullName evidence="1">Diadenosine 5',5'''-P1,P4-tetraphosphate pyrophosphohydrolase</fullName>
    </alternativeName>
    <alternativeName>
        <fullName evidence="1">Diadenosine tetraphosphatase</fullName>
    </alternativeName>
</protein>
<keyword id="KW-0378">Hydrolase</keyword>
<comment type="function">
    <text evidence="1">Hydrolyzes diadenosine 5',5'''-P1,P4-tetraphosphate to yield ADP.</text>
</comment>
<comment type="catalytic activity">
    <reaction evidence="1">
        <text>P(1),P(4)-bis(5'-adenosyl) tetraphosphate + H2O = 2 ADP + 2 H(+)</text>
        <dbReference type="Rhea" id="RHEA:24252"/>
        <dbReference type="ChEBI" id="CHEBI:15377"/>
        <dbReference type="ChEBI" id="CHEBI:15378"/>
        <dbReference type="ChEBI" id="CHEBI:58141"/>
        <dbReference type="ChEBI" id="CHEBI:456216"/>
        <dbReference type="EC" id="3.6.1.41"/>
    </reaction>
</comment>
<comment type="similarity">
    <text evidence="1">Belongs to the Ap4A hydrolase family.</text>
</comment>
<reference key="1">
    <citation type="journal article" date="2008" name="BMC Genomics">
        <title>The genome of Aeromonas salmonicida subsp. salmonicida A449: insights into the evolution of a fish pathogen.</title>
        <authorList>
            <person name="Reith M.E."/>
            <person name="Singh R.K."/>
            <person name="Curtis B."/>
            <person name="Boyd J.M."/>
            <person name="Bouevitch A."/>
            <person name="Kimball J."/>
            <person name="Munholland J."/>
            <person name="Murphy C."/>
            <person name="Sarty D."/>
            <person name="Williams J."/>
            <person name="Nash J.H."/>
            <person name="Johnson S.C."/>
            <person name="Brown L.L."/>
        </authorList>
    </citation>
    <scope>NUCLEOTIDE SEQUENCE [LARGE SCALE GENOMIC DNA]</scope>
    <source>
        <strain>A449</strain>
    </source>
</reference>
<name>APAH_AERS4</name>
<gene>
    <name evidence="1" type="primary">apaH</name>
    <name type="ordered locus">ASA_3352</name>
</gene>
<sequence>MANCFVGDIQGCYDDLRRLLDLAKFDPAKDVLWLCGDLVARGPDSLKTLRYVKSLGQRAVTVLGNHDLHLLAVADGVAPLKKKDKLQALMEAPDRDELLTWLRHRPLLAEHPDLPIMMVHAGISPAWDARTARNCAREVESLLRGDQYSWLLHNMYGDLPDGWSEDLAGIERYRYIINTFTRMRFCYFDGRLEFKCKKGPTESTPGLRPWFEQREHHMDDPILVFGHWAALMGNTGRNDIKALDTGCVWGNSLTLWRYEDDALIATPCPTHAK</sequence>